<reference key="1">
    <citation type="journal article" date="2015" name="Proc. Natl. Acad. Sci. U.S.A.">
        <title>Trichodesmium genome maintains abundant, widespread noncoding DNA in situ, despite oligotrophic lifestyle.</title>
        <authorList>
            <person name="Walworth N."/>
            <person name="Pfreundt U."/>
            <person name="Nelson W.C."/>
            <person name="Mincer T."/>
            <person name="Heidelberg J.F."/>
            <person name="Fu F."/>
            <person name="Waterbury J.B."/>
            <person name="Glavina del Rio T."/>
            <person name="Goodwin L."/>
            <person name="Kyrpides N.C."/>
            <person name="Land M.L."/>
            <person name="Woyke T."/>
            <person name="Hutchins D.A."/>
            <person name="Hess W.R."/>
            <person name="Webb E.A."/>
        </authorList>
    </citation>
    <scope>NUCLEOTIDE SEQUENCE [LARGE SCALE GENOMIC DNA]</scope>
    <source>
        <strain>IMS101</strain>
    </source>
</reference>
<gene>
    <name evidence="1" type="primary">rpoB</name>
    <name type="ordered locus">Tery_2939</name>
</gene>
<sequence length="1102" mass="123704">MTYQKLNVNTYSNLQIFNMPDLIEIQRASFRWFLEYGLIEELDSYSPITDYTGKLELHFIAKNYKLKQPKYSVEESKRRDSSYAVQMYVPTRLINKETGEIKEQEVFIGDLPLMTDRGTFIINGAERVIVNQIVRSPGVYYKSETDKSGRRTYNASLIPNRGAWLKFETDKNDLVWVRIDKTRKLSAQVLLKALGLGDSEIFDSLRHPDYFQKTIEKEGQYGEEEALLELYRKLRPGEPPTIAGGEQLLHSRFFDQKRYDLGQVGRYKLNNKLRLNLPNTVRVLTKEDILASIDYLINLEYDIGQTDDIDHLGNRRVRSVGELLQNQIRVGLNRLERIIRERMTVSESETLTPTSLVNPKPLVAAIKEFFGSSQLSQFMDQTNPLAELTHKRRISALGPGGLTRERAGFAVRDIHPSHYGRICPIETPEGPNAGLIGSLANHAKVNSYGFIETPYYPVENGRVLRDRTPIYMTADAEDDLRVAPGDIMTDAEGKILGDVVPVRYRQDFTTTNPQQVDYVAVSPVQVVSVATSLIPFLEHDDANRALMGSNMQRQAVPLLNPDRPLVGTGLEPQAARDSGMVVVTRTDGEVSYVDSTKISVIDKEGNQADYPLCKYQRSNQDTCLNQRPLVFEGDQVVAGQVLADGSSTEGAELALGQNVLVAYMPWEGYNYEDAILISERLVYDDVYTSIHIEKFEIEARQTKLGPEEITREIPNVGEDGLRNLDEQGIIRVGAWVQSGDILVGKVTPKGESDQPPEEKLLRAIFGEKARDVRDNSLRVPNGEKGRIVDVRVFTREKGDELPPGANMVVRVYVAQKRKIQVGDKVAGRHGNKGIISRILPIEDMPYLPDGTPIDVVLNPLGVPSRMNVGQIFECLLGWAGEILSVRFKCVPFDEMHGPEKSRETVHLMLKLARDNSGKDWVFDEKHPGKIWVFDGRTGERFDRPVTVGIAYMLKLVHLVDDKIHARSTGPYSLVTQQPLGGKAQQGGQRFGEMEVWALEAFGAAYTLQELLTVKSDDMQGRNEALNAIVKGKAIPRPGTPESFKVLMRELQSLCLDIAAHKVETVDDGTTQDVEVDLMADLPGKRTPSRPIYESLSTEGNQD</sequence>
<dbReference type="EC" id="2.7.7.6" evidence="1"/>
<dbReference type="EMBL" id="CP000393">
    <property type="protein sequence ID" value="ABG52103.1"/>
    <property type="molecule type" value="Genomic_DNA"/>
</dbReference>
<dbReference type="RefSeq" id="WP_011612461.1">
    <property type="nucleotide sequence ID" value="NC_008312.1"/>
</dbReference>
<dbReference type="SMR" id="Q110H1"/>
<dbReference type="STRING" id="203124.Tery_2939"/>
<dbReference type="KEGG" id="ter:Tery_2939"/>
<dbReference type="eggNOG" id="COG0085">
    <property type="taxonomic scope" value="Bacteria"/>
</dbReference>
<dbReference type="HOGENOM" id="CLU_000524_4_3_3"/>
<dbReference type="GO" id="GO:0000428">
    <property type="term" value="C:DNA-directed RNA polymerase complex"/>
    <property type="evidence" value="ECO:0007669"/>
    <property type="project" value="UniProtKB-KW"/>
</dbReference>
<dbReference type="GO" id="GO:0003677">
    <property type="term" value="F:DNA binding"/>
    <property type="evidence" value="ECO:0007669"/>
    <property type="project" value="UniProtKB-UniRule"/>
</dbReference>
<dbReference type="GO" id="GO:0003899">
    <property type="term" value="F:DNA-directed RNA polymerase activity"/>
    <property type="evidence" value="ECO:0007669"/>
    <property type="project" value="UniProtKB-UniRule"/>
</dbReference>
<dbReference type="GO" id="GO:0032549">
    <property type="term" value="F:ribonucleoside binding"/>
    <property type="evidence" value="ECO:0007669"/>
    <property type="project" value="InterPro"/>
</dbReference>
<dbReference type="GO" id="GO:0006351">
    <property type="term" value="P:DNA-templated transcription"/>
    <property type="evidence" value="ECO:0007669"/>
    <property type="project" value="UniProtKB-UniRule"/>
</dbReference>
<dbReference type="CDD" id="cd00653">
    <property type="entry name" value="RNA_pol_B_RPB2"/>
    <property type="match status" value="1"/>
</dbReference>
<dbReference type="FunFam" id="3.90.1800.10:FF:000001">
    <property type="entry name" value="DNA-directed RNA polymerase subunit beta"/>
    <property type="match status" value="1"/>
</dbReference>
<dbReference type="Gene3D" id="2.40.50.100">
    <property type="match status" value="1"/>
</dbReference>
<dbReference type="Gene3D" id="2.40.50.150">
    <property type="match status" value="1"/>
</dbReference>
<dbReference type="Gene3D" id="3.90.1100.10">
    <property type="match status" value="1"/>
</dbReference>
<dbReference type="Gene3D" id="2.30.150.10">
    <property type="entry name" value="DNA-directed RNA polymerase, beta subunit, external 1 domain"/>
    <property type="match status" value="1"/>
</dbReference>
<dbReference type="Gene3D" id="2.40.270.10">
    <property type="entry name" value="DNA-directed RNA polymerase, subunit 2, domain 6"/>
    <property type="match status" value="1"/>
</dbReference>
<dbReference type="Gene3D" id="3.90.1800.10">
    <property type="entry name" value="RNA polymerase alpha subunit dimerisation domain"/>
    <property type="match status" value="1"/>
</dbReference>
<dbReference type="Gene3D" id="3.90.1110.10">
    <property type="entry name" value="RNA polymerase Rpb2, domain 2"/>
    <property type="match status" value="1"/>
</dbReference>
<dbReference type="HAMAP" id="MF_01321">
    <property type="entry name" value="RNApol_bact_RpoB"/>
    <property type="match status" value="1"/>
</dbReference>
<dbReference type="InterPro" id="IPR042107">
    <property type="entry name" value="DNA-dir_RNA_pol_bsu_ext_1_sf"/>
</dbReference>
<dbReference type="InterPro" id="IPR019462">
    <property type="entry name" value="DNA-dir_RNA_pol_bsu_external_1"/>
</dbReference>
<dbReference type="InterPro" id="IPR015712">
    <property type="entry name" value="DNA-dir_RNA_pol_su2"/>
</dbReference>
<dbReference type="InterPro" id="IPR007120">
    <property type="entry name" value="DNA-dir_RNAP_su2_dom"/>
</dbReference>
<dbReference type="InterPro" id="IPR037033">
    <property type="entry name" value="DNA-dir_RNAP_su2_hyb_sf"/>
</dbReference>
<dbReference type="InterPro" id="IPR010243">
    <property type="entry name" value="RNA_pol_bsu_bac"/>
</dbReference>
<dbReference type="InterPro" id="IPR007121">
    <property type="entry name" value="RNA_pol_bsu_CS"/>
</dbReference>
<dbReference type="InterPro" id="IPR007644">
    <property type="entry name" value="RNA_pol_bsu_protrusion"/>
</dbReference>
<dbReference type="InterPro" id="IPR007642">
    <property type="entry name" value="RNA_pol_Rpb2_2"/>
</dbReference>
<dbReference type="InterPro" id="IPR037034">
    <property type="entry name" value="RNA_pol_Rpb2_2_sf"/>
</dbReference>
<dbReference type="InterPro" id="IPR007645">
    <property type="entry name" value="RNA_pol_Rpb2_3"/>
</dbReference>
<dbReference type="InterPro" id="IPR007641">
    <property type="entry name" value="RNA_pol_Rpb2_7"/>
</dbReference>
<dbReference type="InterPro" id="IPR014724">
    <property type="entry name" value="RNA_pol_RPB2_OB-fold"/>
</dbReference>
<dbReference type="NCBIfam" id="NF001616">
    <property type="entry name" value="PRK00405.1"/>
    <property type="match status" value="1"/>
</dbReference>
<dbReference type="NCBIfam" id="TIGR02013">
    <property type="entry name" value="rpoB"/>
    <property type="match status" value="1"/>
</dbReference>
<dbReference type="PANTHER" id="PTHR20856">
    <property type="entry name" value="DNA-DIRECTED RNA POLYMERASE I SUBUNIT 2"/>
    <property type="match status" value="1"/>
</dbReference>
<dbReference type="Pfam" id="PF04563">
    <property type="entry name" value="RNA_pol_Rpb2_1"/>
    <property type="match status" value="1"/>
</dbReference>
<dbReference type="Pfam" id="PF04561">
    <property type="entry name" value="RNA_pol_Rpb2_2"/>
    <property type="match status" value="1"/>
</dbReference>
<dbReference type="Pfam" id="PF04565">
    <property type="entry name" value="RNA_pol_Rpb2_3"/>
    <property type="match status" value="1"/>
</dbReference>
<dbReference type="Pfam" id="PF10385">
    <property type="entry name" value="RNA_pol_Rpb2_45"/>
    <property type="match status" value="1"/>
</dbReference>
<dbReference type="Pfam" id="PF00562">
    <property type="entry name" value="RNA_pol_Rpb2_6"/>
    <property type="match status" value="1"/>
</dbReference>
<dbReference type="Pfam" id="PF04560">
    <property type="entry name" value="RNA_pol_Rpb2_7"/>
    <property type="match status" value="1"/>
</dbReference>
<dbReference type="SUPFAM" id="SSF64484">
    <property type="entry name" value="beta and beta-prime subunits of DNA dependent RNA-polymerase"/>
    <property type="match status" value="1"/>
</dbReference>
<dbReference type="PROSITE" id="PS01166">
    <property type="entry name" value="RNA_POL_BETA"/>
    <property type="match status" value="1"/>
</dbReference>
<feature type="chain" id="PRO_0000300422" description="DNA-directed RNA polymerase subunit beta">
    <location>
        <begin position="1"/>
        <end position="1102"/>
    </location>
</feature>
<feature type="region of interest" description="Disordered" evidence="2">
    <location>
        <begin position="1081"/>
        <end position="1102"/>
    </location>
</feature>
<keyword id="KW-0240">DNA-directed RNA polymerase</keyword>
<keyword id="KW-0548">Nucleotidyltransferase</keyword>
<keyword id="KW-0804">Transcription</keyword>
<keyword id="KW-0808">Transferase</keyword>
<protein>
    <recommendedName>
        <fullName evidence="1">DNA-directed RNA polymerase subunit beta</fullName>
        <shortName evidence="1">RNAP subunit beta</shortName>
        <ecNumber evidence="1">2.7.7.6</ecNumber>
    </recommendedName>
    <alternativeName>
        <fullName evidence="1">RNA polymerase subunit beta</fullName>
    </alternativeName>
    <alternativeName>
        <fullName evidence="1">Transcriptase subunit beta</fullName>
    </alternativeName>
</protein>
<comment type="function">
    <text evidence="1">DNA-dependent RNA polymerase catalyzes the transcription of DNA into RNA using the four ribonucleoside triphosphates as substrates.</text>
</comment>
<comment type="catalytic activity">
    <reaction evidence="1">
        <text>RNA(n) + a ribonucleoside 5'-triphosphate = RNA(n+1) + diphosphate</text>
        <dbReference type="Rhea" id="RHEA:21248"/>
        <dbReference type="Rhea" id="RHEA-COMP:14527"/>
        <dbReference type="Rhea" id="RHEA-COMP:17342"/>
        <dbReference type="ChEBI" id="CHEBI:33019"/>
        <dbReference type="ChEBI" id="CHEBI:61557"/>
        <dbReference type="ChEBI" id="CHEBI:140395"/>
        <dbReference type="EC" id="2.7.7.6"/>
    </reaction>
</comment>
<comment type="subunit">
    <text evidence="1">In cyanobacteria the RNAP catalytic core is composed of 2 alpha, 1 beta, 1 beta', 1 gamma and 1 omega subunit. When a sigma factor is associated with the core the holoenzyme is formed, which can initiate transcription.</text>
</comment>
<comment type="similarity">
    <text evidence="1">Belongs to the RNA polymerase beta chain family.</text>
</comment>
<name>RPOB_TRIEI</name>
<evidence type="ECO:0000255" key="1">
    <source>
        <dbReference type="HAMAP-Rule" id="MF_01321"/>
    </source>
</evidence>
<evidence type="ECO:0000256" key="2">
    <source>
        <dbReference type="SAM" id="MobiDB-lite"/>
    </source>
</evidence>
<accession>Q110H1</accession>
<organism>
    <name type="scientific">Trichodesmium erythraeum (strain IMS101)</name>
    <dbReference type="NCBI Taxonomy" id="203124"/>
    <lineage>
        <taxon>Bacteria</taxon>
        <taxon>Bacillati</taxon>
        <taxon>Cyanobacteriota</taxon>
        <taxon>Cyanophyceae</taxon>
        <taxon>Oscillatoriophycideae</taxon>
        <taxon>Oscillatoriales</taxon>
        <taxon>Microcoleaceae</taxon>
        <taxon>Trichodesmium</taxon>
    </lineage>
</organism>
<proteinExistence type="inferred from homology"/>